<evidence type="ECO:0000255" key="1">
    <source>
        <dbReference type="HAMAP-Rule" id="MF_00268"/>
    </source>
</evidence>
<keyword id="KW-0067">ATP-binding</keyword>
<keyword id="KW-0963">Cytoplasm</keyword>
<keyword id="KW-0227">DNA damage</keyword>
<keyword id="KW-0233">DNA recombination</keyword>
<keyword id="KW-0234">DNA repair</keyword>
<keyword id="KW-0238">DNA-binding</keyword>
<keyword id="KW-0547">Nucleotide-binding</keyword>
<keyword id="KW-0742">SOS response</keyword>
<gene>
    <name evidence="1" type="primary">recA</name>
    <name type="ordered locus">MGAS10270_Spy1867</name>
</gene>
<reference key="1">
    <citation type="journal article" date="2006" name="Proc. Natl. Acad. Sci. U.S.A.">
        <title>Molecular genetic anatomy of inter- and intraserotype variation in the human bacterial pathogen group A Streptococcus.</title>
        <authorList>
            <person name="Beres S.B."/>
            <person name="Richter E.W."/>
            <person name="Nagiec M.J."/>
            <person name="Sumby P."/>
            <person name="Porcella S.F."/>
            <person name="DeLeo F.R."/>
            <person name="Musser J.M."/>
        </authorList>
    </citation>
    <scope>NUCLEOTIDE SEQUENCE [LARGE SCALE GENOMIC DNA]</scope>
    <source>
        <strain>MGAS10270</strain>
    </source>
</reference>
<organism>
    <name type="scientific">Streptococcus pyogenes serotype M2 (strain MGAS10270)</name>
    <dbReference type="NCBI Taxonomy" id="370552"/>
    <lineage>
        <taxon>Bacteria</taxon>
        <taxon>Bacillati</taxon>
        <taxon>Bacillota</taxon>
        <taxon>Bacilli</taxon>
        <taxon>Lactobacillales</taxon>
        <taxon>Streptococcaceae</taxon>
        <taxon>Streptococcus</taxon>
    </lineage>
</organism>
<name>RECA_STRPD</name>
<feature type="chain" id="PRO_1000048013" description="Protein RecA">
    <location>
        <begin position="1"/>
        <end position="378"/>
    </location>
</feature>
<feature type="binding site" evidence="1">
    <location>
        <begin position="79"/>
        <end position="86"/>
    </location>
    <ligand>
        <name>ATP</name>
        <dbReference type="ChEBI" id="CHEBI:30616"/>
    </ligand>
</feature>
<dbReference type="EMBL" id="CP000260">
    <property type="protein sequence ID" value="ABF34932.1"/>
    <property type="molecule type" value="Genomic_DNA"/>
</dbReference>
<dbReference type="SMR" id="Q1JEH7"/>
<dbReference type="KEGG" id="sph:MGAS10270_Spy1867"/>
<dbReference type="HOGENOM" id="CLU_040469_3_2_9"/>
<dbReference type="Proteomes" id="UP000002436">
    <property type="component" value="Chromosome"/>
</dbReference>
<dbReference type="GO" id="GO:0005829">
    <property type="term" value="C:cytosol"/>
    <property type="evidence" value="ECO:0007669"/>
    <property type="project" value="TreeGrafter"/>
</dbReference>
<dbReference type="GO" id="GO:0005524">
    <property type="term" value="F:ATP binding"/>
    <property type="evidence" value="ECO:0007669"/>
    <property type="project" value="UniProtKB-UniRule"/>
</dbReference>
<dbReference type="GO" id="GO:0016887">
    <property type="term" value="F:ATP hydrolysis activity"/>
    <property type="evidence" value="ECO:0007669"/>
    <property type="project" value="InterPro"/>
</dbReference>
<dbReference type="GO" id="GO:0140664">
    <property type="term" value="F:ATP-dependent DNA damage sensor activity"/>
    <property type="evidence" value="ECO:0007669"/>
    <property type="project" value="InterPro"/>
</dbReference>
<dbReference type="GO" id="GO:0003684">
    <property type="term" value="F:damaged DNA binding"/>
    <property type="evidence" value="ECO:0007669"/>
    <property type="project" value="UniProtKB-UniRule"/>
</dbReference>
<dbReference type="GO" id="GO:0003697">
    <property type="term" value="F:single-stranded DNA binding"/>
    <property type="evidence" value="ECO:0007669"/>
    <property type="project" value="UniProtKB-UniRule"/>
</dbReference>
<dbReference type="GO" id="GO:0006310">
    <property type="term" value="P:DNA recombination"/>
    <property type="evidence" value="ECO:0007669"/>
    <property type="project" value="UniProtKB-UniRule"/>
</dbReference>
<dbReference type="GO" id="GO:0006281">
    <property type="term" value="P:DNA repair"/>
    <property type="evidence" value="ECO:0007669"/>
    <property type="project" value="UniProtKB-UniRule"/>
</dbReference>
<dbReference type="GO" id="GO:0009432">
    <property type="term" value="P:SOS response"/>
    <property type="evidence" value="ECO:0007669"/>
    <property type="project" value="UniProtKB-UniRule"/>
</dbReference>
<dbReference type="CDD" id="cd00983">
    <property type="entry name" value="RecA"/>
    <property type="match status" value="1"/>
</dbReference>
<dbReference type="FunFam" id="3.40.50.300:FF:000087">
    <property type="entry name" value="Recombinase RecA"/>
    <property type="match status" value="1"/>
</dbReference>
<dbReference type="Gene3D" id="3.40.50.300">
    <property type="entry name" value="P-loop containing nucleotide triphosphate hydrolases"/>
    <property type="match status" value="1"/>
</dbReference>
<dbReference type="HAMAP" id="MF_00268">
    <property type="entry name" value="RecA"/>
    <property type="match status" value="1"/>
</dbReference>
<dbReference type="InterPro" id="IPR003593">
    <property type="entry name" value="AAA+_ATPase"/>
</dbReference>
<dbReference type="InterPro" id="IPR013765">
    <property type="entry name" value="DNA_recomb/repair_RecA"/>
</dbReference>
<dbReference type="InterPro" id="IPR020584">
    <property type="entry name" value="DNA_recomb/repair_RecA_CS"/>
</dbReference>
<dbReference type="InterPro" id="IPR027417">
    <property type="entry name" value="P-loop_NTPase"/>
</dbReference>
<dbReference type="InterPro" id="IPR049261">
    <property type="entry name" value="RecA-like_C"/>
</dbReference>
<dbReference type="InterPro" id="IPR049428">
    <property type="entry name" value="RecA-like_N"/>
</dbReference>
<dbReference type="InterPro" id="IPR020588">
    <property type="entry name" value="RecA_ATP-bd"/>
</dbReference>
<dbReference type="InterPro" id="IPR023400">
    <property type="entry name" value="RecA_C_sf"/>
</dbReference>
<dbReference type="InterPro" id="IPR020587">
    <property type="entry name" value="RecA_monomer-monomer_interface"/>
</dbReference>
<dbReference type="NCBIfam" id="TIGR02012">
    <property type="entry name" value="tigrfam_recA"/>
    <property type="match status" value="1"/>
</dbReference>
<dbReference type="PANTHER" id="PTHR45900:SF1">
    <property type="entry name" value="MITOCHONDRIAL DNA REPAIR PROTEIN RECA HOMOLOG-RELATED"/>
    <property type="match status" value="1"/>
</dbReference>
<dbReference type="PANTHER" id="PTHR45900">
    <property type="entry name" value="RECA"/>
    <property type="match status" value="1"/>
</dbReference>
<dbReference type="Pfam" id="PF00154">
    <property type="entry name" value="RecA"/>
    <property type="match status" value="1"/>
</dbReference>
<dbReference type="Pfam" id="PF21096">
    <property type="entry name" value="RecA_C"/>
    <property type="match status" value="1"/>
</dbReference>
<dbReference type="PRINTS" id="PR00142">
    <property type="entry name" value="RECA"/>
</dbReference>
<dbReference type="SMART" id="SM00382">
    <property type="entry name" value="AAA"/>
    <property type="match status" value="1"/>
</dbReference>
<dbReference type="SUPFAM" id="SSF52540">
    <property type="entry name" value="P-loop containing nucleoside triphosphate hydrolases"/>
    <property type="match status" value="1"/>
</dbReference>
<dbReference type="SUPFAM" id="SSF54752">
    <property type="entry name" value="RecA protein, C-terminal domain"/>
    <property type="match status" value="1"/>
</dbReference>
<dbReference type="PROSITE" id="PS00321">
    <property type="entry name" value="RECA_1"/>
    <property type="match status" value="1"/>
</dbReference>
<dbReference type="PROSITE" id="PS50162">
    <property type="entry name" value="RECA_2"/>
    <property type="match status" value="1"/>
</dbReference>
<dbReference type="PROSITE" id="PS50163">
    <property type="entry name" value="RECA_3"/>
    <property type="match status" value="1"/>
</dbReference>
<protein>
    <recommendedName>
        <fullName evidence="1">Protein RecA</fullName>
    </recommendedName>
    <alternativeName>
        <fullName evidence="1">Recombinase A</fullName>
    </alternativeName>
</protein>
<accession>Q1JEH7</accession>
<comment type="function">
    <text evidence="1">Can catalyze the hydrolysis of ATP in the presence of single-stranded DNA, the ATP-dependent uptake of single-stranded DNA by duplex DNA, and the ATP-dependent hybridization of homologous single-stranded DNAs. It interacts with LexA causing its activation and leading to its autocatalytic cleavage.</text>
</comment>
<comment type="subcellular location">
    <subcellularLocation>
        <location evidence="1">Cytoplasm</location>
    </subcellularLocation>
</comment>
<comment type="similarity">
    <text evidence="1">Belongs to the RecA family.</text>
</comment>
<sequence length="378" mass="40631">MAKKLKKNEEITKKFGDERRKALDDALKNIEKDFGKGAVMRLGERAEQKVQVMSSGSLALDIALGAGGYPKGRIIEIYGPESSGKTTVALHAVAQAQKEGGIAAFIDAEHALDPAYAAALGVNIDELLLSQPDSGEQGLEIAGKLIDSGAVDLVVVDSVAALVPRAEIDGDIGDSHVGLQARMMSQAMRKLSASINKTKTIAIFINQLREKVGVMFGNPETTPGGRALKFYASVRLDVRGTTQIKGTGDQKDSSIGKETKIKVVKNKVAPPFKVAEVEIMYGEGISRTGELVKIASDLDIIQKAGAWFSYNGEKIGQGSENAKRYLADHPQLFDEIDRKVRVKFGLLEESEEESAMAVASEETDDLALDLDNGIEIED</sequence>
<proteinExistence type="inferred from homology"/>